<protein>
    <recommendedName>
        <fullName>Pentatricopeptide repeat-containing protein At4g19220, mitochondrial</fullName>
    </recommendedName>
</protein>
<evidence type="ECO:0000255" key="1"/>
<evidence type="ECO:0000305" key="2"/>
<dbReference type="EMBL" id="AL021687">
    <property type="protein sequence ID" value="CAA16711.1"/>
    <property type="status" value="ALT_SEQ"/>
    <property type="molecule type" value="Genomic_DNA"/>
</dbReference>
<dbReference type="EMBL" id="AL161550">
    <property type="protein sequence ID" value="CAB78924.1"/>
    <property type="status" value="ALT_SEQ"/>
    <property type="molecule type" value="Genomic_DNA"/>
</dbReference>
<dbReference type="EMBL" id="CP002687">
    <property type="protein sequence ID" value="AEE84161.2"/>
    <property type="molecule type" value="Genomic_DNA"/>
</dbReference>
<dbReference type="PIR" id="T04443">
    <property type="entry name" value="T04443"/>
</dbReference>
<dbReference type="RefSeq" id="NP_001319994.1">
    <property type="nucleotide sequence ID" value="NM_001341331.1"/>
</dbReference>
<dbReference type="SMR" id="O49680"/>
<dbReference type="FunCoup" id="O49680">
    <property type="interactions" value="8"/>
</dbReference>
<dbReference type="STRING" id="3702.O49680"/>
<dbReference type="PaxDb" id="3702-AT4G19220.1"/>
<dbReference type="EnsemblPlants" id="AT4G19220.1">
    <property type="protein sequence ID" value="AT4G19220.1"/>
    <property type="gene ID" value="AT4G19220"/>
</dbReference>
<dbReference type="GeneID" id="827662"/>
<dbReference type="Gramene" id="AT4G19220.1">
    <property type="protein sequence ID" value="AT4G19220.1"/>
    <property type="gene ID" value="AT4G19220"/>
</dbReference>
<dbReference type="KEGG" id="ath:AT4G19220"/>
<dbReference type="Araport" id="AT4G19220"/>
<dbReference type="TAIR" id="AT4G19220"/>
<dbReference type="eggNOG" id="KOG4197">
    <property type="taxonomic scope" value="Eukaryota"/>
</dbReference>
<dbReference type="HOGENOM" id="CLU_002706_15_1_1"/>
<dbReference type="InParanoid" id="O49680"/>
<dbReference type="OMA" id="HGWGIKL"/>
<dbReference type="PhylomeDB" id="O49680"/>
<dbReference type="PRO" id="PR:O49680"/>
<dbReference type="Proteomes" id="UP000006548">
    <property type="component" value="Chromosome 4"/>
</dbReference>
<dbReference type="ExpressionAtlas" id="O49680">
    <property type="expression patterns" value="baseline and differential"/>
</dbReference>
<dbReference type="GO" id="GO:0005739">
    <property type="term" value="C:mitochondrion"/>
    <property type="evidence" value="ECO:0007669"/>
    <property type="project" value="UniProtKB-SubCell"/>
</dbReference>
<dbReference type="GO" id="GO:0003723">
    <property type="term" value="F:RNA binding"/>
    <property type="evidence" value="ECO:0007669"/>
    <property type="project" value="InterPro"/>
</dbReference>
<dbReference type="GO" id="GO:0009451">
    <property type="term" value="P:RNA modification"/>
    <property type="evidence" value="ECO:0007669"/>
    <property type="project" value="InterPro"/>
</dbReference>
<dbReference type="FunFam" id="1.25.40.10:FF:000975">
    <property type="entry name" value="Pentatricopeptide repeat-containing protein"/>
    <property type="match status" value="1"/>
</dbReference>
<dbReference type="FunFam" id="1.25.40.10:FF:000073">
    <property type="entry name" value="Pentatricopeptide repeat-containing protein chloroplastic"/>
    <property type="match status" value="1"/>
</dbReference>
<dbReference type="Gene3D" id="1.25.40.10">
    <property type="entry name" value="Tetratricopeptide repeat domain"/>
    <property type="match status" value="6"/>
</dbReference>
<dbReference type="InterPro" id="IPR046848">
    <property type="entry name" value="E_motif"/>
</dbReference>
<dbReference type="InterPro" id="IPR002885">
    <property type="entry name" value="Pentatricopeptide_rpt"/>
</dbReference>
<dbReference type="InterPro" id="IPR046960">
    <property type="entry name" value="PPR_At4g14850-like_plant"/>
</dbReference>
<dbReference type="InterPro" id="IPR011990">
    <property type="entry name" value="TPR-like_helical_dom_sf"/>
</dbReference>
<dbReference type="NCBIfam" id="TIGR00756">
    <property type="entry name" value="PPR"/>
    <property type="match status" value="5"/>
</dbReference>
<dbReference type="PANTHER" id="PTHR47926">
    <property type="entry name" value="PENTATRICOPEPTIDE REPEAT-CONTAINING PROTEIN"/>
    <property type="match status" value="1"/>
</dbReference>
<dbReference type="PANTHER" id="PTHR47926:SF481">
    <property type="entry name" value="TETRATRICOPEPTIDE-LIKE HELICAL DOMAIN SUPERFAMILY"/>
    <property type="match status" value="1"/>
</dbReference>
<dbReference type="Pfam" id="PF20431">
    <property type="entry name" value="E_motif"/>
    <property type="match status" value="1"/>
</dbReference>
<dbReference type="Pfam" id="PF01535">
    <property type="entry name" value="PPR"/>
    <property type="match status" value="10"/>
</dbReference>
<dbReference type="Pfam" id="PF13041">
    <property type="entry name" value="PPR_2"/>
    <property type="match status" value="1"/>
</dbReference>
<dbReference type="PROSITE" id="PS51375">
    <property type="entry name" value="PPR"/>
    <property type="match status" value="17"/>
</dbReference>
<comment type="subcellular location">
    <subcellularLocation>
        <location evidence="2">Mitochondrion</location>
    </subcellularLocation>
</comment>
<comment type="similarity">
    <text evidence="2">Belongs to the PPR family. PCMP-E subfamily.</text>
</comment>
<comment type="sequence caution" evidence="2">
    <conflict type="erroneous gene model prediction">
        <sequence resource="EMBL-CDS" id="CAA16711"/>
    </conflict>
</comment>
<comment type="sequence caution" evidence="2">
    <conflict type="erroneous gene model prediction">
        <sequence resource="EMBL-CDS" id="CAB78924"/>
    </conflict>
</comment>
<comment type="online information" name="Pentatricopeptide repeat proteins">
    <link uri="https://ppr.plantenergy.uwa.edu.au"/>
</comment>
<keyword id="KW-0496">Mitochondrion</keyword>
<keyword id="KW-1185">Reference proteome</keyword>
<keyword id="KW-0677">Repeat</keyword>
<keyword id="KW-0809">Transit peptide</keyword>
<organism>
    <name type="scientific">Arabidopsis thaliana</name>
    <name type="common">Mouse-ear cress</name>
    <dbReference type="NCBI Taxonomy" id="3702"/>
    <lineage>
        <taxon>Eukaryota</taxon>
        <taxon>Viridiplantae</taxon>
        <taxon>Streptophyta</taxon>
        <taxon>Embryophyta</taxon>
        <taxon>Tracheophyta</taxon>
        <taxon>Spermatophyta</taxon>
        <taxon>Magnoliopsida</taxon>
        <taxon>eudicotyledons</taxon>
        <taxon>Gunneridae</taxon>
        <taxon>Pentapetalae</taxon>
        <taxon>rosids</taxon>
        <taxon>malvids</taxon>
        <taxon>Brassicales</taxon>
        <taxon>Brassicaceae</taxon>
        <taxon>Camelineae</taxon>
        <taxon>Arabidopsis</taxon>
    </lineage>
</organism>
<feature type="transit peptide" description="Mitochondrion" evidence="1">
    <location>
        <begin position="1"/>
        <end position="63"/>
    </location>
</feature>
<feature type="chain" id="PRO_0000363441" description="Pentatricopeptide repeat-containing protein At4g19220, mitochondrial">
    <location>
        <begin position="64"/>
        <end position="951"/>
    </location>
</feature>
<feature type="repeat" description="PPR 1">
    <location>
        <begin position="121"/>
        <end position="151"/>
    </location>
</feature>
<feature type="repeat" description="PPR 2">
    <location>
        <begin position="152"/>
        <end position="186"/>
    </location>
</feature>
<feature type="repeat" description="PPR 3">
    <location>
        <begin position="187"/>
        <end position="221"/>
    </location>
</feature>
<feature type="repeat" description="PPR 4">
    <location>
        <begin position="222"/>
        <end position="252"/>
    </location>
</feature>
<feature type="repeat" description="PPR 5">
    <location>
        <begin position="253"/>
        <end position="287"/>
    </location>
</feature>
<feature type="repeat" description="PPR 6">
    <location>
        <begin position="288"/>
        <end position="322"/>
    </location>
</feature>
<feature type="repeat" description="PPR 7">
    <location>
        <begin position="325"/>
        <end position="355"/>
    </location>
</feature>
<feature type="repeat" description="PPR 8">
    <location>
        <begin position="356"/>
        <end position="386"/>
    </location>
</feature>
<feature type="repeat" description="PPR 9">
    <location>
        <begin position="392"/>
        <end position="426"/>
    </location>
</feature>
<feature type="repeat" description="PPR 10">
    <location>
        <begin position="428"/>
        <end position="458"/>
    </location>
</feature>
<feature type="repeat" description="PPR 11">
    <location>
        <begin position="459"/>
        <end position="489"/>
    </location>
</feature>
<feature type="repeat" description="PPR 12">
    <location>
        <begin position="496"/>
        <end position="530"/>
    </location>
</feature>
<feature type="repeat" description="PPR 13">
    <location>
        <begin position="531"/>
        <end position="561"/>
    </location>
</feature>
<feature type="repeat" description="PPR 14">
    <location>
        <begin position="563"/>
        <end position="597"/>
    </location>
</feature>
<feature type="repeat" description="PPR 15">
    <location>
        <begin position="599"/>
        <end position="629"/>
    </location>
</feature>
<feature type="repeat" description="PPR 16">
    <location>
        <begin position="634"/>
        <end position="668"/>
    </location>
</feature>
<feature type="repeat" description="PPR 17">
    <location>
        <begin position="669"/>
        <end position="695"/>
    </location>
</feature>
<feature type="repeat" description="PPR 18">
    <location>
        <begin position="697"/>
        <end position="731"/>
    </location>
</feature>
<feature type="repeat" description="PPR 19">
    <location>
        <begin position="732"/>
        <end position="762"/>
    </location>
</feature>
<feature type="repeat" description="PPR 20">
    <location>
        <begin position="763"/>
        <end position="793"/>
    </location>
</feature>
<feature type="repeat" description="PPR 21">
    <location>
        <begin position="799"/>
        <end position="829"/>
    </location>
</feature>
<feature type="repeat" description="PPR 22">
    <location>
        <begin position="835"/>
        <end position="865"/>
    </location>
</feature>
<feature type="region of interest" description="Type E motif">
    <location>
        <begin position="870"/>
        <end position="945"/>
    </location>
</feature>
<accession>O49680</accession>
<accession>F4JT49</accession>
<reference key="1">
    <citation type="journal article" date="1999" name="Nature">
        <title>Sequence and analysis of chromosome 4 of the plant Arabidopsis thaliana.</title>
        <authorList>
            <person name="Mayer K.F.X."/>
            <person name="Schueller C."/>
            <person name="Wambutt R."/>
            <person name="Murphy G."/>
            <person name="Volckaert G."/>
            <person name="Pohl T."/>
            <person name="Duesterhoeft A."/>
            <person name="Stiekema W."/>
            <person name="Entian K.-D."/>
            <person name="Terryn N."/>
            <person name="Harris B."/>
            <person name="Ansorge W."/>
            <person name="Brandt P."/>
            <person name="Grivell L.A."/>
            <person name="Rieger M."/>
            <person name="Weichselgartner M."/>
            <person name="de Simone V."/>
            <person name="Obermaier B."/>
            <person name="Mache R."/>
            <person name="Mueller M."/>
            <person name="Kreis M."/>
            <person name="Delseny M."/>
            <person name="Puigdomenech P."/>
            <person name="Watson M."/>
            <person name="Schmidtheini T."/>
            <person name="Reichert B."/>
            <person name="Portetelle D."/>
            <person name="Perez-Alonso M."/>
            <person name="Boutry M."/>
            <person name="Bancroft I."/>
            <person name="Vos P."/>
            <person name="Hoheisel J."/>
            <person name="Zimmermann W."/>
            <person name="Wedler H."/>
            <person name="Ridley P."/>
            <person name="Langham S.-A."/>
            <person name="McCullagh B."/>
            <person name="Bilham L."/>
            <person name="Robben J."/>
            <person name="van der Schueren J."/>
            <person name="Grymonprez B."/>
            <person name="Chuang Y.-J."/>
            <person name="Vandenbussche F."/>
            <person name="Braeken M."/>
            <person name="Weltjens I."/>
            <person name="Voet M."/>
            <person name="Bastiaens I."/>
            <person name="Aert R."/>
            <person name="Defoor E."/>
            <person name="Weitzenegger T."/>
            <person name="Bothe G."/>
            <person name="Ramsperger U."/>
            <person name="Hilbert H."/>
            <person name="Braun M."/>
            <person name="Holzer E."/>
            <person name="Brandt A."/>
            <person name="Peters S."/>
            <person name="van Staveren M."/>
            <person name="Dirkse W."/>
            <person name="Mooijman P."/>
            <person name="Klein Lankhorst R."/>
            <person name="Rose M."/>
            <person name="Hauf J."/>
            <person name="Koetter P."/>
            <person name="Berneiser S."/>
            <person name="Hempel S."/>
            <person name="Feldpausch M."/>
            <person name="Lamberth S."/>
            <person name="Van den Daele H."/>
            <person name="De Keyser A."/>
            <person name="Buysshaert C."/>
            <person name="Gielen J."/>
            <person name="Villarroel R."/>
            <person name="De Clercq R."/>
            <person name="van Montagu M."/>
            <person name="Rogers J."/>
            <person name="Cronin A."/>
            <person name="Quail M.A."/>
            <person name="Bray-Allen S."/>
            <person name="Clark L."/>
            <person name="Doggett J."/>
            <person name="Hall S."/>
            <person name="Kay M."/>
            <person name="Lennard N."/>
            <person name="McLay K."/>
            <person name="Mayes R."/>
            <person name="Pettett A."/>
            <person name="Rajandream M.A."/>
            <person name="Lyne M."/>
            <person name="Benes V."/>
            <person name="Rechmann S."/>
            <person name="Borkova D."/>
            <person name="Bloecker H."/>
            <person name="Scharfe M."/>
            <person name="Grimm M."/>
            <person name="Loehnert T.-H."/>
            <person name="Dose S."/>
            <person name="de Haan M."/>
            <person name="Maarse A.C."/>
            <person name="Schaefer M."/>
            <person name="Mueller-Auer S."/>
            <person name="Gabel C."/>
            <person name="Fuchs M."/>
            <person name="Fartmann B."/>
            <person name="Granderath K."/>
            <person name="Dauner D."/>
            <person name="Herzl A."/>
            <person name="Neumann S."/>
            <person name="Argiriou A."/>
            <person name="Vitale D."/>
            <person name="Liguori R."/>
            <person name="Piravandi E."/>
            <person name="Massenet O."/>
            <person name="Quigley F."/>
            <person name="Clabauld G."/>
            <person name="Muendlein A."/>
            <person name="Felber R."/>
            <person name="Schnabl S."/>
            <person name="Hiller R."/>
            <person name="Schmidt W."/>
            <person name="Lecharny A."/>
            <person name="Aubourg S."/>
            <person name="Chefdor F."/>
            <person name="Cooke R."/>
            <person name="Berger C."/>
            <person name="Monfort A."/>
            <person name="Casacuberta E."/>
            <person name="Gibbons T."/>
            <person name="Weber N."/>
            <person name="Vandenbol M."/>
            <person name="Bargues M."/>
            <person name="Terol J."/>
            <person name="Torres A."/>
            <person name="Perez-Perez A."/>
            <person name="Purnelle B."/>
            <person name="Bent E."/>
            <person name="Johnson S."/>
            <person name="Tacon D."/>
            <person name="Jesse T."/>
            <person name="Heijnen L."/>
            <person name="Schwarz S."/>
            <person name="Scholler P."/>
            <person name="Heber S."/>
            <person name="Francs P."/>
            <person name="Bielke C."/>
            <person name="Frishman D."/>
            <person name="Haase D."/>
            <person name="Lemcke K."/>
            <person name="Mewes H.-W."/>
            <person name="Stocker S."/>
            <person name="Zaccaria P."/>
            <person name="Bevan M."/>
            <person name="Wilson R.K."/>
            <person name="de la Bastide M."/>
            <person name="Habermann K."/>
            <person name="Parnell L."/>
            <person name="Dedhia N."/>
            <person name="Gnoj L."/>
            <person name="Schutz K."/>
            <person name="Huang E."/>
            <person name="Spiegel L."/>
            <person name="Sekhon M."/>
            <person name="Murray J."/>
            <person name="Sheet P."/>
            <person name="Cordes M."/>
            <person name="Abu-Threideh J."/>
            <person name="Stoneking T."/>
            <person name="Kalicki J."/>
            <person name="Graves T."/>
            <person name="Harmon G."/>
            <person name="Edwards J."/>
            <person name="Latreille P."/>
            <person name="Courtney L."/>
            <person name="Cloud J."/>
            <person name="Abbott A."/>
            <person name="Scott K."/>
            <person name="Johnson D."/>
            <person name="Minx P."/>
            <person name="Bentley D."/>
            <person name="Fulton B."/>
            <person name="Miller N."/>
            <person name="Greco T."/>
            <person name="Kemp K."/>
            <person name="Kramer J."/>
            <person name="Fulton L."/>
            <person name="Mardis E."/>
            <person name="Dante M."/>
            <person name="Pepin K."/>
            <person name="Hillier L.W."/>
            <person name="Nelson J."/>
            <person name="Spieth J."/>
            <person name="Ryan E."/>
            <person name="Andrews S."/>
            <person name="Geisel C."/>
            <person name="Layman D."/>
            <person name="Du H."/>
            <person name="Ali J."/>
            <person name="Berghoff A."/>
            <person name="Jones K."/>
            <person name="Drone K."/>
            <person name="Cotton M."/>
            <person name="Joshu C."/>
            <person name="Antonoiu B."/>
            <person name="Zidanic M."/>
            <person name="Strong C."/>
            <person name="Sun H."/>
            <person name="Lamar B."/>
            <person name="Yordan C."/>
            <person name="Ma P."/>
            <person name="Zhong J."/>
            <person name="Preston R."/>
            <person name="Vil D."/>
            <person name="Shekher M."/>
            <person name="Matero A."/>
            <person name="Shah R."/>
            <person name="Swaby I.K."/>
            <person name="O'Shaughnessy A."/>
            <person name="Rodriguez M."/>
            <person name="Hoffman J."/>
            <person name="Till S."/>
            <person name="Granat S."/>
            <person name="Shohdy N."/>
            <person name="Hasegawa A."/>
            <person name="Hameed A."/>
            <person name="Lodhi M."/>
            <person name="Johnson A."/>
            <person name="Chen E."/>
            <person name="Marra M.A."/>
            <person name="Martienssen R."/>
            <person name="McCombie W.R."/>
        </authorList>
    </citation>
    <scope>NUCLEOTIDE SEQUENCE [LARGE SCALE GENOMIC DNA]</scope>
    <source>
        <strain>cv. Columbia</strain>
    </source>
</reference>
<reference key="2">
    <citation type="journal article" date="2017" name="Plant J.">
        <title>Araport11: a complete reannotation of the Arabidopsis thaliana reference genome.</title>
        <authorList>
            <person name="Cheng C.Y."/>
            <person name="Krishnakumar V."/>
            <person name="Chan A.P."/>
            <person name="Thibaud-Nissen F."/>
            <person name="Schobel S."/>
            <person name="Town C.D."/>
        </authorList>
    </citation>
    <scope>GENOME REANNOTATION</scope>
    <source>
        <strain>cv. Columbia</strain>
    </source>
</reference>
<reference key="3">
    <citation type="journal article" date="2000" name="Plant Mol. Biol.">
        <title>In Arabidopsis thaliana, 1% of the genome codes for a novel protein family unique to plants.</title>
        <authorList>
            <person name="Aubourg S."/>
            <person name="Boudet N."/>
            <person name="Kreis M."/>
            <person name="Lecharny A."/>
        </authorList>
    </citation>
    <scope>GENE FAMILY</scope>
</reference>
<reference key="4">
    <citation type="journal article" date="2004" name="Plant Cell">
        <title>Genome-wide analysis of Arabidopsis pentatricopeptide repeat proteins reveals their essential role in organelle biogenesis.</title>
        <authorList>
            <person name="Lurin C."/>
            <person name="Andres C."/>
            <person name="Aubourg S."/>
            <person name="Bellaoui M."/>
            <person name="Bitton F."/>
            <person name="Bruyere C."/>
            <person name="Caboche M."/>
            <person name="Debast C."/>
            <person name="Gualberto J."/>
            <person name="Hoffmann B."/>
            <person name="Lecharny A."/>
            <person name="Le Ret M."/>
            <person name="Martin-Magniette M.-L."/>
            <person name="Mireau H."/>
            <person name="Peeters N."/>
            <person name="Renou J.-P."/>
            <person name="Szurek B."/>
            <person name="Taconnat L."/>
            <person name="Small I."/>
        </authorList>
    </citation>
    <scope>GENE FAMILY</scope>
</reference>
<gene>
    <name type="primary">PCMP-E2</name>
    <name type="ordered locus">At4g19220</name>
    <name type="ORF">T18B16.190</name>
</gene>
<sequence>MLLVMVRSSTISPKSLRLYCSGHIIDSLRHSISRWNSPSGYCSNYYFSKRKHKRHFTSSVLSPVTPIVHNLFDELPERENRTMESSFMFLRDVLRSFMMRTETETPRSVHCFALKCGLLQDLATSSKLLTFYGRTGELVSSSCLFDELKEKDVIVWNSMITALNQNGRYIAAVGLFIEMIHKGNEFDSTTLLLAASALSSLHLSRKCSMLHCLAIETGLVGDSSLCNALMNLYAKGENLSSAECVFTHMEHRDIVSWNTIMTKCLANGHPRKSLQYFKSMTGSGQEADTVTFSCVISACSSIEELTLGESLHGLVIKSGYSPEAHVSVGNSIISMYSKCGDTEAAETVFEELVCRDVISSNAILNGFAANGMFEEAFGILNQMQSVDKIQPDIATVVSITSICGDLSFSREGRAVHGYTVRMEMQSRALEVINSVIDMYGKCGLTTQAELLFKTTTHRDLVSWNSMISAFSQNGFTHKAKNLFKEVVSEYSCSKFSLSTVLAILTSCDSSDSLIFGKSVHCWLQKLGFGDNMLSANSVINMYIGCRDLTSAFLRLETMSETRDLTSWNSVISGCASSGHHLESLRAFQAMSREGKIRHDLITLLGTISASGNLGLVLQGRCFHGLAIKSLRELDTQLQNTLITMYGRCKDIESAVKVFGLISDPNLCSWNCVISALSQNKAGREVFQLFRNLKLEPNEITFVGLLSASTQLGSTSYGMQAHCHLIRRGFQANPFVSAALVDMYSSCGMLETGMKVFRNSGVNSISAWNSVISAHGFHGMGEKAMELFKELSSNSEMEPNKSSFISLLSACSHSGFIDEGLSYYKQMEEKFGVKPVTEHRVWIVDMLGRAGKLREAYEFITGIGEPQKAGVWGALLSACNYHGDTKLGKEVAEVLFEMEPDNASYYISLANTYVGLGGWEEAVRLRKMVEDNALKKLPGYSVIDVRCLDTVS</sequence>
<proteinExistence type="inferred from homology"/>
<name>PP324_ARATH</name>